<proteinExistence type="inferred from homology"/>
<sequence>MSKFFRRRKFCKFTAEGVKEIDYKDLNTLRQYLTENGKIVPSRVTGTKSKYQRQLATAVKRARFLALIPYTDNHDV</sequence>
<comment type="function">
    <text evidence="1">Binds as a heterodimer with protein bS6 to the central domain of the 16S rRNA, where it helps stabilize the platform of the 30S subunit.</text>
</comment>
<comment type="subunit">
    <text evidence="1">Part of the 30S ribosomal subunit. Forms a tight heterodimer with protein bS6.</text>
</comment>
<comment type="similarity">
    <text evidence="1">Belongs to the bacterial ribosomal protein bS18 family.</text>
</comment>
<protein>
    <recommendedName>
        <fullName evidence="1">Small ribosomal subunit protein bS18</fullName>
    </recommendedName>
    <alternativeName>
        <fullName evidence="2">30S ribosomal protein S18</fullName>
    </alternativeName>
</protein>
<name>RS18_STRMK</name>
<dbReference type="EMBL" id="AM743169">
    <property type="protein sequence ID" value="CAQ46594.1"/>
    <property type="molecule type" value="Genomic_DNA"/>
</dbReference>
<dbReference type="RefSeq" id="WP_002804494.1">
    <property type="nucleotide sequence ID" value="NC_010943.1"/>
</dbReference>
<dbReference type="SMR" id="B2FKJ8"/>
<dbReference type="EnsemblBacteria" id="CAQ46594">
    <property type="protein sequence ID" value="CAQ46594"/>
    <property type="gene ID" value="Smlt3149"/>
</dbReference>
<dbReference type="GeneID" id="97510001"/>
<dbReference type="KEGG" id="sml:Smlt3149"/>
<dbReference type="eggNOG" id="COG0238">
    <property type="taxonomic scope" value="Bacteria"/>
</dbReference>
<dbReference type="HOGENOM" id="CLU_148710_2_3_6"/>
<dbReference type="Proteomes" id="UP000008840">
    <property type="component" value="Chromosome"/>
</dbReference>
<dbReference type="GO" id="GO:0022627">
    <property type="term" value="C:cytosolic small ribosomal subunit"/>
    <property type="evidence" value="ECO:0007669"/>
    <property type="project" value="TreeGrafter"/>
</dbReference>
<dbReference type="GO" id="GO:0070181">
    <property type="term" value="F:small ribosomal subunit rRNA binding"/>
    <property type="evidence" value="ECO:0007669"/>
    <property type="project" value="TreeGrafter"/>
</dbReference>
<dbReference type="GO" id="GO:0003735">
    <property type="term" value="F:structural constituent of ribosome"/>
    <property type="evidence" value="ECO:0007669"/>
    <property type="project" value="InterPro"/>
</dbReference>
<dbReference type="GO" id="GO:0006412">
    <property type="term" value="P:translation"/>
    <property type="evidence" value="ECO:0007669"/>
    <property type="project" value="UniProtKB-UniRule"/>
</dbReference>
<dbReference type="FunFam" id="4.10.640.10:FF:000001">
    <property type="entry name" value="30S ribosomal protein S18"/>
    <property type="match status" value="1"/>
</dbReference>
<dbReference type="Gene3D" id="4.10.640.10">
    <property type="entry name" value="Ribosomal protein S18"/>
    <property type="match status" value="1"/>
</dbReference>
<dbReference type="HAMAP" id="MF_00270">
    <property type="entry name" value="Ribosomal_bS18"/>
    <property type="match status" value="1"/>
</dbReference>
<dbReference type="InterPro" id="IPR001648">
    <property type="entry name" value="Ribosomal_bS18"/>
</dbReference>
<dbReference type="InterPro" id="IPR018275">
    <property type="entry name" value="Ribosomal_bS18_CS"/>
</dbReference>
<dbReference type="InterPro" id="IPR036870">
    <property type="entry name" value="Ribosomal_bS18_sf"/>
</dbReference>
<dbReference type="NCBIfam" id="TIGR00165">
    <property type="entry name" value="S18"/>
    <property type="match status" value="1"/>
</dbReference>
<dbReference type="PANTHER" id="PTHR13479">
    <property type="entry name" value="30S RIBOSOMAL PROTEIN S18"/>
    <property type="match status" value="1"/>
</dbReference>
<dbReference type="PANTHER" id="PTHR13479:SF40">
    <property type="entry name" value="SMALL RIBOSOMAL SUBUNIT PROTEIN BS18M"/>
    <property type="match status" value="1"/>
</dbReference>
<dbReference type="Pfam" id="PF01084">
    <property type="entry name" value="Ribosomal_S18"/>
    <property type="match status" value="1"/>
</dbReference>
<dbReference type="PRINTS" id="PR00974">
    <property type="entry name" value="RIBOSOMALS18"/>
</dbReference>
<dbReference type="SUPFAM" id="SSF46911">
    <property type="entry name" value="Ribosomal protein S18"/>
    <property type="match status" value="1"/>
</dbReference>
<dbReference type="PROSITE" id="PS00057">
    <property type="entry name" value="RIBOSOMAL_S18"/>
    <property type="match status" value="1"/>
</dbReference>
<accession>B2FKJ8</accession>
<reference key="1">
    <citation type="journal article" date="2008" name="Genome Biol.">
        <title>The complete genome, comparative and functional analysis of Stenotrophomonas maltophilia reveals an organism heavily shielded by drug resistance determinants.</title>
        <authorList>
            <person name="Crossman L.C."/>
            <person name="Gould V.C."/>
            <person name="Dow J.M."/>
            <person name="Vernikos G.S."/>
            <person name="Okazaki A."/>
            <person name="Sebaihia M."/>
            <person name="Saunders D."/>
            <person name="Arrowsmith C."/>
            <person name="Carver T."/>
            <person name="Peters N."/>
            <person name="Adlem E."/>
            <person name="Kerhornou A."/>
            <person name="Lord A."/>
            <person name="Murphy L."/>
            <person name="Seeger K."/>
            <person name="Squares R."/>
            <person name="Rutter S."/>
            <person name="Quail M.A."/>
            <person name="Rajandream M.A."/>
            <person name="Harris D."/>
            <person name="Churcher C."/>
            <person name="Bentley S.D."/>
            <person name="Parkhill J."/>
            <person name="Thomson N.R."/>
            <person name="Avison M.B."/>
        </authorList>
    </citation>
    <scope>NUCLEOTIDE SEQUENCE [LARGE SCALE GENOMIC DNA]</scope>
    <source>
        <strain>K279a</strain>
    </source>
</reference>
<feature type="chain" id="PRO_1000114455" description="Small ribosomal subunit protein bS18">
    <location>
        <begin position="1"/>
        <end position="76"/>
    </location>
</feature>
<organism>
    <name type="scientific">Stenotrophomonas maltophilia (strain K279a)</name>
    <dbReference type="NCBI Taxonomy" id="522373"/>
    <lineage>
        <taxon>Bacteria</taxon>
        <taxon>Pseudomonadati</taxon>
        <taxon>Pseudomonadota</taxon>
        <taxon>Gammaproteobacteria</taxon>
        <taxon>Lysobacterales</taxon>
        <taxon>Lysobacteraceae</taxon>
        <taxon>Stenotrophomonas</taxon>
        <taxon>Stenotrophomonas maltophilia group</taxon>
    </lineage>
</organism>
<evidence type="ECO:0000255" key="1">
    <source>
        <dbReference type="HAMAP-Rule" id="MF_00270"/>
    </source>
</evidence>
<evidence type="ECO:0000305" key="2"/>
<gene>
    <name evidence="1" type="primary">rpsR</name>
    <name type="ordered locus">Smlt3149</name>
</gene>
<keyword id="KW-1185">Reference proteome</keyword>
<keyword id="KW-0687">Ribonucleoprotein</keyword>
<keyword id="KW-0689">Ribosomal protein</keyword>
<keyword id="KW-0694">RNA-binding</keyword>
<keyword id="KW-0699">rRNA-binding</keyword>